<reference key="1">
    <citation type="journal article" date="1999" name="Genomics">
        <title>Structure and chromosomal assignment of the sterol 12alpha-hydroxylase gene (CYP8B1) in human and mouse: eukaryotic cytochrome P-450 gene devoid of introns.</title>
        <authorList>
            <person name="Gaafvels M."/>
            <person name="Olin M."/>
            <person name="Chowdhary B.P."/>
            <person name="Raudsepp T."/>
            <person name="Andersson U."/>
            <person name="Persson B."/>
            <person name="Jansson M."/>
            <person name="Bjoerkhem I."/>
            <person name="Eggertsen G."/>
        </authorList>
    </citation>
    <scope>NUCLEOTIDE SEQUENCE [GENOMIC DNA / MRNA]</scope>
    <scope>VARIANT LYS-242</scope>
    <scope>TISSUE SPECIFICITY</scope>
    <scope>INDUCTION</scope>
    <source>
        <strain>129/SvJ</strain>
        <strain>BALB/cJ</strain>
        <tissue>Liver</tissue>
    </source>
</reference>
<reference key="2">
    <citation type="journal article" date="2004" name="Genome Res.">
        <title>The status, quality, and expansion of the NIH full-length cDNA project: the Mammalian Gene Collection (MGC).</title>
        <authorList>
            <consortium name="The MGC Project Team"/>
        </authorList>
    </citation>
    <scope>NUCLEOTIDE SEQUENCE [LARGE SCALE MRNA]</scope>
    <source>
        <strain>FVB/N</strain>
        <tissue>Liver</tissue>
    </source>
</reference>
<reference key="3">
    <citation type="journal article" date="2002" name="J. Clin. Invest.">
        <title>Cholic acid mediates negative feedback regulation of bile acid synthesis in mice.</title>
        <authorList>
            <person name="Li-Hawkins J."/>
            <person name="Gaafvels M."/>
            <person name="Olin M."/>
            <person name="Lund E.G."/>
            <person name="Andersson U."/>
            <person name="Schuster G."/>
            <person name="Bjoerkhem I."/>
            <person name="Russell D.W."/>
            <person name="Eggertsen G."/>
        </authorList>
    </citation>
    <scope>FUNCTION</scope>
    <scope>PATHWAY</scope>
    <scope>DISRUPTION PHENOTYPE</scope>
</reference>
<reference key="4">
    <citation type="journal article" date="2010" name="Cell">
        <title>A tissue-specific atlas of mouse protein phosphorylation and expression.</title>
        <authorList>
            <person name="Huttlin E.L."/>
            <person name="Jedrychowski M.P."/>
            <person name="Elias J.E."/>
            <person name="Goswami T."/>
            <person name="Rad R."/>
            <person name="Beausoleil S.A."/>
            <person name="Villen J."/>
            <person name="Haas W."/>
            <person name="Sowa M.E."/>
            <person name="Gygi S.P."/>
        </authorList>
    </citation>
    <scope>IDENTIFICATION BY MASS SPECTROMETRY [LARGE SCALE ANALYSIS]</scope>
    <source>
        <tissue>Liver</tissue>
    </source>
</reference>
<reference key="5">
    <citation type="journal article" date="2017" name="Am. J. Physiol.">
        <title>Cyp8b1 ablation prevents Western diet-induced weight gain and hepatic steatosis because of impaired fat absorption.</title>
        <authorList>
            <person name="Bertaggia E."/>
            <person name="Jensen K.K."/>
            <person name="Castro-Perez J."/>
            <person name="Xu Y."/>
            <person name="Di Paolo G."/>
            <person name="Chan R.B."/>
            <person name="Wang L."/>
            <person name="Haeusler R.A."/>
        </authorList>
    </citation>
    <scope>FUNCTION</scope>
    <scope>PATHWAY</scope>
    <scope>DISRUPTION PHENOTYPE</scope>
</reference>
<dbReference type="EC" id="1.14.14.139" evidence="2"/>
<dbReference type="EMBL" id="AF090317">
    <property type="protein sequence ID" value="AAC63036.1"/>
    <property type="molecule type" value="mRNA"/>
</dbReference>
<dbReference type="EMBL" id="AF090319">
    <property type="protein sequence ID" value="AAD19876.1"/>
    <property type="molecule type" value="Genomic_DNA"/>
</dbReference>
<dbReference type="EMBL" id="BC010973">
    <property type="protein sequence ID" value="AAH10973.1"/>
    <property type="molecule type" value="mRNA"/>
</dbReference>
<dbReference type="EMBL" id="BC010974">
    <property type="protein sequence ID" value="AAH10974.1"/>
    <property type="molecule type" value="mRNA"/>
</dbReference>
<dbReference type="EMBL" id="BC049969">
    <property type="protein sequence ID" value="AAH49969.1"/>
    <property type="molecule type" value="mRNA"/>
</dbReference>
<dbReference type="CCDS" id="CCDS23641.1"/>
<dbReference type="RefSeq" id="NP_034142.3">
    <property type="nucleotide sequence ID" value="NM_010012.3"/>
</dbReference>
<dbReference type="SMR" id="O88962"/>
<dbReference type="FunCoup" id="O88962">
    <property type="interactions" value="184"/>
</dbReference>
<dbReference type="STRING" id="10090.ENSMUSP00000052989"/>
<dbReference type="GlyGen" id="O88962">
    <property type="glycosylation" value="1 site, 1 O-linked glycan (1 site)"/>
</dbReference>
<dbReference type="iPTMnet" id="O88962"/>
<dbReference type="PhosphoSitePlus" id="O88962"/>
<dbReference type="SwissPalm" id="O88962"/>
<dbReference type="jPOST" id="O88962"/>
<dbReference type="PaxDb" id="10090-ENSMUSP00000052989"/>
<dbReference type="PeptideAtlas" id="O88962"/>
<dbReference type="ProteomicsDB" id="285284"/>
<dbReference type="GeneID" id="13124"/>
<dbReference type="KEGG" id="mmu:13124"/>
<dbReference type="UCSC" id="uc009sef.2">
    <property type="organism name" value="mouse"/>
</dbReference>
<dbReference type="AGR" id="MGI:1338044"/>
<dbReference type="CTD" id="1582"/>
<dbReference type="MGI" id="MGI:1338044">
    <property type="gene designation" value="Cyp8b1"/>
</dbReference>
<dbReference type="eggNOG" id="KOG0684">
    <property type="taxonomic scope" value="Eukaryota"/>
</dbReference>
<dbReference type="InParanoid" id="O88962"/>
<dbReference type="OrthoDB" id="6692864at2759"/>
<dbReference type="PhylomeDB" id="O88962"/>
<dbReference type="TreeFam" id="TF105090"/>
<dbReference type="Reactome" id="R-MMU-193368">
    <property type="pathway name" value="Synthesis of bile acids and bile salts via 7alpha-hydroxycholesterol"/>
</dbReference>
<dbReference type="Reactome" id="R-MMU-193775">
    <property type="pathway name" value="Synthesis of bile acids and bile salts via 24-hydroxycholesterol"/>
</dbReference>
<dbReference type="Reactome" id="R-MMU-193807">
    <property type="pathway name" value="Synthesis of bile acids and bile salts via 27-hydroxycholesterol"/>
</dbReference>
<dbReference type="Reactome" id="R-MMU-197264">
    <property type="pathway name" value="Nicotinamide salvaging"/>
</dbReference>
<dbReference type="Reactome" id="R-MMU-211979">
    <property type="pathway name" value="Eicosanoids"/>
</dbReference>
<dbReference type="Reactome" id="R-MMU-211994">
    <property type="pathway name" value="Sterols are 12-hydroxylated by CYP8B1"/>
</dbReference>
<dbReference type="Reactome" id="R-MMU-2162123">
    <property type="pathway name" value="Synthesis of Prostaglandins (PG) and Thromboxanes (TX)"/>
</dbReference>
<dbReference type="UniPathway" id="UPA00221"/>
<dbReference type="BioGRID-ORCS" id="13124">
    <property type="hits" value="1 hit in 80 CRISPR screens"/>
</dbReference>
<dbReference type="PRO" id="PR:O88962"/>
<dbReference type="Proteomes" id="UP000000589">
    <property type="component" value="Unplaced"/>
</dbReference>
<dbReference type="RNAct" id="O88962">
    <property type="molecule type" value="protein"/>
</dbReference>
<dbReference type="GO" id="GO:0005789">
    <property type="term" value="C:endoplasmic reticulum membrane"/>
    <property type="evidence" value="ECO:0000250"/>
    <property type="project" value="UniProtKB"/>
</dbReference>
<dbReference type="GO" id="GO:0020037">
    <property type="term" value="F:heme binding"/>
    <property type="evidence" value="ECO:0007669"/>
    <property type="project" value="InterPro"/>
</dbReference>
<dbReference type="GO" id="GO:0005506">
    <property type="term" value="F:iron ion binding"/>
    <property type="evidence" value="ECO:0007669"/>
    <property type="project" value="InterPro"/>
</dbReference>
<dbReference type="GO" id="GO:0008397">
    <property type="term" value="F:sterol 12-alpha-hydroxylase activity"/>
    <property type="evidence" value="ECO:0000250"/>
    <property type="project" value="UniProtKB"/>
</dbReference>
<dbReference type="GO" id="GO:0006699">
    <property type="term" value="P:bile acid biosynthetic process"/>
    <property type="evidence" value="ECO:0000315"/>
    <property type="project" value="UniProtKB"/>
</dbReference>
<dbReference type="GO" id="GO:0045797">
    <property type="term" value="P:positive regulation of intestinal cholesterol absorption"/>
    <property type="evidence" value="ECO:0000314"/>
    <property type="project" value="UniProtKB"/>
</dbReference>
<dbReference type="GO" id="GO:0006694">
    <property type="term" value="P:steroid biosynthetic process"/>
    <property type="evidence" value="ECO:0007669"/>
    <property type="project" value="UniProtKB-KW"/>
</dbReference>
<dbReference type="FunFam" id="1.10.630.10:FF:000025">
    <property type="entry name" value="Prostaglandin I2 (prostacyclin) synthase"/>
    <property type="match status" value="1"/>
</dbReference>
<dbReference type="Gene3D" id="1.10.630.10">
    <property type="entry name" value="Cytochrome P450"/>
    <property type="match status" value="1"/>
</dbReference>
<dbReference type="InterPro" id="IPR001128">
    <property type="entry name" value="Cyt_P450"/>
</dbReference>
<dbReference type="InterPro" id="IPR024204">
    <property type="entry name" value="Cyt_P450_CYP7A1-type"/>
</dbReference>
<dbReference type="InterPro" id="IPR002403">
    <property type="entry name" value="Cyt_P450_E_grp-IV"/>
</dbReference>
<dbReference type="InterPro" id="IPR036396">
    <property type="entry name" value="Cyt_P450_sf"/>
</dbReference>
<dbReference type="InterPro" id="IPR030686">
    <property type="entry name" value="Cytochrome_CYP8B1"/>
</dbReference>
<dbReference type="PANTHER" id="PTHR24306">
    <property type="match status" value="1"/>
</dbReference>
<dbReference type="PANTHER" id="PTHR24306:SF0">
    <property type="entry name" value="7-ALPHA-HYDROXYCHOLEST-4-EN-3-ONE 12-ALPHA-HYDROXYLASE"/>
    <property type="match status" value="1"/>
</dbReference>
<dbReference type="Pfam" id="PF00067">
    <property type="entry name" value="p450"/>
    <property type="match status" value="1"/>
</dbReference>
<dbReference type="PIRSF" id="PIRSF500627">
    <property type="entry name" value="Cytochrome_CYP8B1"/>
    <property type="match status" value="1"/>
</dbReference>
<dbReference type="PIRSF" id="PIRSF000047">
    <property type="entry name" value="Cytochrome_CYPVIIA1"/>
    <property type="match status" value="1"/>
</dbReference>
<dbReference type="PRINTS" id="PR00465">
    <property type="entry name" value="EP450IV"/>
</dbReference>
<dbReference type="SUPFAM" id="SSF48264">
    <property type="entry name" value="Cytochrome P450"/>
    <property type="match status" value="1"/>
</dbReference>
<feature type="chain" id="PRO_0000051914" description="7-alpha-hydroxycholest-4-en-3-one 12-alpha-hydroxylase">
    <location>
        <begin position="1"/>
        <end position="500"/>
    </location>
</feature>
<feature type="transmembrane region" description="Helical" evidence="4">
    <location>
        <begin position="4"/>
        <end position="24"/>
    </location>
</feature>
<feature type="binding site" description="axial binding residue" evidence="1">
    <location>
        <position position="439"/>
    </location>
    <ligand>
        <name>heme</name>
        <dbReference type="ChEBI" id="CHEBI:30413"/>
    </ligand>
    <ligandPart>
        <name>Fe</name>
        <dbReference type="ChEBI" id="CHEBI:18248"/>
    </ligandPart>
</feature>
<feature type="modified residue" description="Phosphoserine" evidence="3">
    <location>
        <position position="325"/>
    </location>
</feature>
<feature type="sequence variant" description="In strain: 129/SvJ." evidence="5">
    <original>E</original>
    <variation>K</variation>
    <location>
        <position position="242"/>
    </location>
</feature>
<evidence type="ECO:0000250" key="1"/>
<evidence type="ECO:0000250" key="2">
    <source>
        <dbReference type="UniProtKB" id="O02766"/>
    </source>
</evidence>
<evidence type="ECO:0000250" key="3">
    <source>
        <dbReference type="UniProtKB" id="Q9UNU6"/>
    </source>
</evidence>
<evidence type="ECO:0000255" key="4"/>
<evidence type="ECO:0000269" key="5">
    <source>
    </source>
</evidence>
<evidence type="ECO:0000269" key="6">
    <source>
    </source>
</evidence>
<evidence type="ECO:0000269" key="7">
    <source>
    </source>
</evidence>
<evidence type="ECO:0000305" key="8"/>
<organism>
    <name type="scientific">Mus musculus</name>
    <name type="common">Mouse</name>
    <dbReference type="NCBI Taxonomy" id="10090"/>
    <lineage>
        <taxon>Eukaryota</taxon>
        <taxon>Metazoa</taxon>
        <taxon>Chordata</taxon>
        <taxon>Craniata</taxon>
        <taxon>Vertebrata</taxon>
        <taxon>Euteleostomi</taxon>
        <taxon>Mammalia</taxon>
        <taxon>Eutheria</taxon>
        <taxon>Euarchontoglires</taxon>
        <taxon>Glires</taxon>
        <taxon>Rodentia</taxon>
        <taxon>Myomorpha</taxon>
        <taxon>Muroidea</taxon>
        <taxon>Muridae</taxon>
        <taxon>Murinae</taxon>
        <taxon>Mus</taxon>
        <taxon>Mus</taxon>
    </lineage>
</organism>
<proteinExistence type="evidence at protein level"/>
<gene>
    <name type="primary">Cyp8b1</name>
    <name type="synonym">Cyp12</name>
</gene>
<accession>O88962</accession>
<accession>Q9R217</accession>
<keyword id="KW-0256">Endoplasmic reticulum</keyword>
<keyword id="KW-0349">Heme</keyword>
<keyword id="KW-0408">Iron</keyword>
<keyword id="KW-0444">Lipid biosynthesis</keyword>
<keyword id="KW-0443">Lipid metabolism</keyword>
<keyword id="KW-0472">Membrane</keyword>
<keyword id="KW-0479">Metal-binding</keyword>
<keyword id="KW-0492">Microsome</keyword>
<keyword id="KW-0503">Monooxygenase</keyword>
<keyword id="KW-0560">Oxidoreductase</keyword>
<keyword id="KW-0597">Phosphoprotein</keyword>
<keyword id="KW-1185">Reference proteome</keyword>
<keyword id="KW-0752">Steroid biosynthesis</keyword>
<keyword id="KW-0812">Transmembrane</keyword>
<keyword id="KW-1133">Transmembrane helix</keyword>
<protein>
    <recommendedName>
        <fullName>7-alpha-hydroxycholest-4-en-3-one 12-alpha-hydroxylase</fullName>
        <ecNumber evidence="2">1.14.14.139</ecNumber>
    </recommendedName>
    <alternativeName>
        <fullName>7-alpha-hydroxy-4-cholesten-3-one 12-alpha-hydroxylase</fullName>
    </alternativeName>
    <alternativeName>
        <fullName>CYPVIIIB1</fullName>
    </alternativeName>
    <alternativeName>
        <fullName>Cytochrome P450 8B1</fullName>
    </alternativeName>
    <alternativeName>
        <fullName>Sterol 12-alpha-hydroxylase</fullName>
    </alternativeName>
</protein>
<sequence length="500" mass="57706">MTLWCTVLGALLTVVGCLCLSLLLRHRRPWEPPLDKGFVPWLGHSMAFRKNMFEFLKGMRAKHGDVFTVQLGGQYFTFVMDPLSFGPIIKNTEKALDFQSYAKELVLKVFGYQSVDGDHRMIHLASTKHLMGQGLEELNQAMLDSLSLVMLGPKGSSLGASSWCEDGLFHFCYRILFKAGFLSLFGYTKDKQQDLDEADELFRKFRRFDFLFPRFVYSLLGPREWVEVSQLQRLFHQRLSVEQNLEKDGISCWLGYMLQFLREQGIASSMQDKFNFMMLWASQGNTGPTCFWVLLFLLKHQDAMKAVREEATRVMGKARLEAKKSFTFTPSALKHTPVLDSVMEESLRLCATPTLLRVVQEDYVLKMASGQEYQIRRGDKVALFPYLSVHMDPDIHPEPTAFKYDRFLNPDGTRKVDFYKSGKKIHHYSMPWGSGVSKCPGRFFALSEMKTFVLLMIMYFDFKLVDPDIPVPPIDPRRWGFGTSQPSHEVRFLYRLKPVQ</sequence>
<name>CP8B1_MOUSE</name>
<comment type="function">
    <text evidence="2 3 6 7">A cytochrome P450 monooxygenase involved in primary bile acid biosynthesis. Catalyzes the 12alpha-hydroxylation of 7alpha-hydroxy-4-cholesten-3-one, an intermediate metabolite in cholic acid biosynthesis (By similarity). Controls biliary balance of cholic acid and chenodeoxycholic acid, ultimately regulating the intestinal absorption of dietary lipids (PubMed:12393855, PubMed:28377401). Mechanistically, uses molecular oxygen inserting one oxygen atom into a substrate, and reducing the second into a water molecule, with two electrons provided by NADPH via cytochrome P450 reductase (CPR; NADPH--hemoprotein reductase) (By similarity).</text>
</comment>
<comment type="catalytic activity">
    <reaction evidence="2">
        <text>7alpha-hydroxycholest-4-en-3-one + reduced [NADPH--hemoprotein reductase] + O2 = 7alpha,12alpha-dihydroxycholest-4-en-3-one + oxidized [NADPH--hemoprotein reductase] + H2O + H(+)</text>
        <dbReference type="Rhea" id="RHEA:46752"/>
        <dbReference type="Rhea" id="RHEA-COMP:11964"/>
        <dbReference type="Rhea" id="RHEA-COMP:11965"/>
        <dbReference type="ChEBI" id="CHEBI:15377"/>
        <dbReference type="ChEBI" id="CHEBI:15378"/>
        <dbReference type="ChEBI" id="CHEBI:15379"/>
        <dbReference type="ChEBI" id="CHEBI:17899"/>
        <dbReference type="ChEBI" id="CHEBI:28477"/>
        <dbReference type="ChEBI" id="CHEBI:57618"/>
        <dbReference type="ChEBI" id="CHEBI:58210"/>
        <dbReference type="EC" id="1.14.14.139"/>
    </reaction>
    <physiologicalReaction direction="left-to-right" evidence="2">
        <dbReference type="Rhea" id="RHEA:46753"/>
    </physiologicalReaction>
</comment>
<comment type="catalytic activity">
    <reaction evidence="2">
        <text>5beta-cholestane-3alpha,7alpha-diol + reduced [NADPH--hemoprotein reductase] + O2 = 5beta-cholestane-3alpha,7alpha,12alpha-triol + oxidized [NADPH--hemoprotein reductase] + H2O + H(+)</text>
        <dbReference type="Rhea" id="RHEA:15261"/>
        <dbReference type="Rhea" id="RHEA-COMP:11964"/>
        <dbReference type="Rhea" id="RHEA-COMP:11965"/>
        <dbReference type="ChEBI" id="CHEBI:15377"/>
        <dbReference type="ChEBI" id="CHEBI:15378"/>
        <dbReference type="ChEBI" id="CHEBI:15379"/>
        <dbReference type="ChEBI" id="CHEBI:16496"/>
        <dbReference type="ChEBI" id="CHEBI:28047"/>
        <dbReference type="ChEBI" id="CHEBI:57618"/>
        <dbReference type="ChEBI" id="CHEBI:58210"/>
        <dbReference type="EC" id="1.14.14.139"/>
    </reaction>
    <physiologicalReaction direction="left-to-right" evidence="2">
        <dbReference type="Rhea" id="RHEA:15262"/>
    </physiologicalReaction>
</comment>
<comment type="catalytic activity">
    <reaction evidence="2">
        <text>chenodeoxycholate + reduced [NADPH--hemoprotein reductase] + O2 = cholate + oxidized [NADPH--hemoprotein reductase] + H2O + H(+)</text>
        <dbReference type="Rhea" id="RHEA:65700"/>
        <dbReference type="Rhea" id="RHEA-COMP:11964"/>
        <dbReference type="Rhea" id="RHEA-COMP:11965"/>
        <dbReference type="ChEBI" id="CHEBI:15377"/>
        <dbReference type="ChEBI" id="CHEBI:15378"/>
        <dbReference type="ChEBI" id="CHEBI:15379"/>
        <dbReference type="ChEBI" id="CHEBI:29747"/>
        <dbReference type="ChEBI" id="CHEBI:36234"/>
        <dbReference type="ChEBI" id="CHEBI:57618"/>
        <dbReference type="ChEBI" id="CHEBI:58210"/>
        <dbReference type="EC" id="1.14.14.139"/>
    </reaction>
    <physiologicalReaction direction="left-to-right" evidence="2">
        <dbReference type="Rhea" id="RHEA:65701"/>
    </physiologicalReaction>
</comment>
<comment type="cofactor">
    <cofactor evidence="2">
        <name>heme</name>
        <dbReference type="ChEBI" id="CHEBI:30413"/>
    </cofactor>
</comment>
<comment type="pathway">
    <text evidence="6 7">Lipid metabolism; bile acid biosynthesis.</text>
</comment>
<comment type="subcellular location">
    <subcellularLocation>
        <location evidence="2">Endoplasmic reticulum membrane</location>
        <topology evidence="4">Single-pass membrane protein</topology>
    </subcellularLocation>
    <subcellularLocation>
        <location evidence="2">Microsome membrane</location>
        <topology evidence="4">Single-pass membrane protein</topology>
    </subcellularLocation>
</comment>
<comment type="tissue specificity">
    <text evidence="5">Expressed in liver.</text>
</comment>
<comment type="induction">
    <text evidence="5">By cholestyramine treatment (PubMed:10051404). Induced upon starvation (PubMed:10051404).</text>
</comment>
<comment type="disruption phenotype">
    <text evidence="6 7">Knockout mice are resistant to Western diet-induced hepatic steatosis due to impaired cholic acid synthesis and deficient fat absorption.</text>
</comment>
<comment type="similarity">
    <text evidence="8">Belongs to the cytochrome P450 family.</text>
</comment>